<gene>
    <name type="primary">pyk</name>
    <name type="ordered locus">SACOL1745</name>
</gene>
<dbReference type="EC" id="2.7.1.40"/>
<dbReference type="EMBL" id="CP000046">
    <property type="protein sequence ID" value="AAW36848.1"/>
    <property type="molecule type" value="Genomic_DNA"/>
</dbReference>
<dbReference type="RefSeq" id="WP_001232648.1">
    <property type="nucleotide sequence ID" value="NZ_JBGOFO010000008.1"/>
</dbReference>
<dbReference type="SMR" id="Q5HF76"/>
<dbReference type="KEGG" id="sac:SACOL1745"/>
<dbReference type="HOGENOM" id="CLU_015439_0_2_9"/>
<dbReference type="UniPathway" id="UPA00109">
    <property type="reaction ID" value="UER00188"/>
</dbReference>
<dbReference type="Proteomes" id="UP000000530">
    <property type="component" value="Chromosome"/>
</dbReference>
<dbReference type="GO" id="GO:0005524">
    <property type="term" value="F:ATP binding"/>
    <property type="evidence" value="ECO:0007669"/>
    <property type="project" value="UniProtKB-KW"/>
</dbReference>
<dbReference type="GO" id="GO:0016301">
    <property type="term" value="F:kinase activity"/>
    <property type="evidence" value="ECO:0007669"/>
    <property type="project" value="UniProtKB-KW"/>
</dbReference>
<dbReference type="GO" id="GO:0000287">
    <property type="term" value="F:magnesium ion binding"/>
    <property type="evidence" value="ECO:0007669"/>
    <property type="project" value="InterPro"/>
</dbReference>
<dbReference type="GO" id="GO:0030955">
    <property type="term" value="F:potassium ion binding"/>
    <property type="evidence" value="ECO:0007669"/>
    <property type="project" value="InterPro"/>
</dbReference>
<dbReference type="GO" id="GO:0004743">
    <property type="term" value="F:pyruvate kinase activity"/>
    <property type="evidence" value="ECO:0007669"/>
    <property type="project" value="UniProtKB-EC"/>
</dbReference>
<dbReference type="FunFam" id="2.40.33.10:FF:000001">
    <property type="entry name" value="Pyruvate kinase"/>
    <property type="match status" value="1"/>
</dbReference>
<dbReference type="FunFam" id="3.20.20.60:FF:000001">
    <property type="entry name" value="Pyruvate kinase"/>
    <property type="match status" value="1"/>
</dbReference>
<dbReference type="FunFam" id="3.40.1380.20:FF:000017">
    <property type="entry name" value="Pyruvate kinase"/>
    <property type="match status" value="1"/>
</dbReference>
<dbReference type="Gene3D" id="3.20.20.60">
    <property type="entry name" value="Phosphoenolpyruvate-binding domains"/>
    <property type="match status" value="1"/>
</dbReference>
<dbReference type="Gene3D" id="3.50.30.10">
    <property type="entry name" value="Phosphohistidine domain"/>
    <property type="match status" value="1"/>
</dbReference>
<dbReference type="Gene3D" id="2.40.33.10">
    <property type="entry name" value="PK beta-barrel domain-like"/>
    <property type="match status" value="1"/>
</dbReference>
<dbReference type="Gene3D" id="3.40.1380.20">
    <property type="entry name" value="Pyruvate kinase, C-terminal domain"/>
    <property type="match status" value="1"/>
</dbReference>
<dbReference type="InterPro" id="IPR008279">
    <property type="entry name" value="PEP-util_enz_mobile_dom"/>
</dbReference>
<dbReference type="InterPro" id="IPR036637">
    <property type="entry name" value="Phosphohistidine_dom_sf"/>
</dbReference>
<dbReference type="InterPro" id="IPR001697">
    <property type="entry name" value="Pyr_Knase"/>
</dbReference>
<dbReference type="InterPro" id="IPR015813">
    <property type="entry name" value="Pyrv/PenolPyrv_kinase-like_dom"/>
</dbReference>
<dbReference type="InterPro" id="IPR040442">
    <property type="entry name" value="Pyrv_kinase-like_dom_sf"/>
</dbReference>
<dbReference type="InterPro" id="IPR011037">
    <property type="entry name" value="Pyrv_Knase-like_insert_dom_sf"/>
</dbReference>
<dbReference type="InterPro" id="IPR015793">
    <property type="entry name" value="Pyrv_Knase_brl"/>
</dbReference>
<dbReference type="InterPro" id="IPR015795">
    <property type="entry name" value="Pyrv_Knase_C"/>
</dbReference>
<dbReference type="InterPro" id="IPR036918">
    <property type="entry name" value="Pyrv_Knase_C_sf"/>
</dbReference>
<dbReference type="InterPro" id="IPR015806">
    <property type="entry name" value="Pyrv_Knase_insert_dom_sf"/>
</dbReference>
<dbReference type="NCBIfam" id="NF004491">
    <property type="entry name" value="PRK05826.1"/>
    <property type="match status" value="1"/>
</dbReference>
<dbReference type="NCBIfam" id="NF004978">
    <property type="entry name" value="PRK06354.1"/>
    <property type="match status" value="1"/>
</dbReference>
<dbReference type="NCBIfam" id="TIGR01064">
    <property type="entry name" value="pyruv_kin"/>
    <property type="match status" value="1"/>
</dbReference>
<dbReference type="PANTHER" id="PTHR11817">
    <property type="entry name" value="PYRUVATE KINASE"/>
    <property type="match status" value="1"/>
</dbReference>
<dbReference type="Pfam" id="PF00391">
    <property type="entry name" value="PEP-utilizers"/>
    <property type="match status" value="1"/>
</dbReference>
<dbReference type="Pfam" id="PF00224">
    <property type="entry name" value="PK"/>
    <property type="match status" value="1"/>
</dbReference>
<dbReference type="Pfam" id="PF02887">
    <property type="entry name" value="PK_C"/>
    <property type="match status" value="1"/>
</dbReference>
<dbReference type="PRINTS" id="PR01050">
    <property type="entry name" value="PYRUVTKNASE"/>
</dbReference>
<dbReference type="SUPFAM" id="SSF51621">
    <property type="entry name" value="Phosphoenolpyruvate/pyruvate domain"/>
    <property type="match status" value="1"/>
</dbReference>
<dbReference type="SUPFAM" id="SSF52009">
    <property type="entry name" value="Phosphohistidine domain"/>
    <property type="match status" value="1"/>
</dbReference>
<dbReference type="SUPFAM" id="SSF50800">
    <property type="entry name" value="PK beta-barrel domain-like"/>
    <property type="match status" value="1"/>
</dbReference>
<dbReference type="SUPFAM" id="SSF52935">
    <property type="entry name" value="PK C-terminal domain-like"/>
    <property type="match status" value="1"/>
</dbReference>
<sequence length="585" mass="63102">MRKTKIVCTIGPASESEEMIEKLINAGMNVARLNFSHGSHEEHKGRIDTIRKVAKRLDKIVAILLDTKGPEIRTHNMKDGIIELERGNEVIVSMNEVEGTPEKFSVTYENLINDVQVGSYILLDDGLIELQVKDIDHAKKEVKCDILNSGELKNKKGVNLPGVRVSLPGITEKDAEDIRFGIKENVDFIAASFVRRPSDVLEIREILEEQKANISVFPKIENQEGIDNIAEILEVSDGLMVARGDMGVEIPPEKVPMVQKDLIRQCNKLGKPVITATQMLDSMQRNPRATRAEASDVANAIYDGTDAVMLSGETAAGLYPEEAVKTMRNIAVSAEAAQDYKKLLSDRTKLVETSLVNAIGISVAHTALNLNVKAIVAATESGSTARTISKYRPHSDIIAVTPSEETARQCSIVWGVQPVVKKGRKSTDALLNNAVATAVETGRVSNGDLIIITAGVPTGETGTTNMMKIHLVGDEIANGQGIGRGSVVGTTLVAETVKDLEGKDLSDKVIVTNSIDETFVPYVEKALGLITEENGITSPSAIVGLEKGIPTVVGVEKAVKNISNNMLVTIDAAQGKIFEGYANVL</sequence>
<evidence type="ECO:0000250" key="1"/>
<evidence type="ECO:0000250" key="2">
    <source>
        <dbReference type="UniProtKB" id="P14618"/>
    </source>
</evidence>
<evidence type="ECO:0000305" key="3"/>
<comment type="catalytic activity">
    <reaction>
        <text>pyruvate + ATP = phosphoenolpyruvate + ADP + H(+)</text>
        <dbReference type="Rhea" id="RHEA:18157"/>
        <dbReference type="ChEBI" id="CHEBI:15361"/>
        <dbReference type="ChEBI" id="CHEBI:15378"/>
        <dbReference type="ChEBI" id="CHEBI:30616"/>
        <dbReference type="ChEBI" id="CHEBI:58702"/>
        <dbReference type="ChEBI" id="CHEBI:456216"/>
        <dbReference type="EC" id="2.7.1.40"/>
    </reaction>
</comment>
<comment type="cofactor">
    <cofactor evidence="1">
        <name>Mg(2+)</name>
        <dbReference type="ChEBI" id="CHEBI:18420"/>
    </cofactor>
</comment>
<comment type="cofactor">
    <cofactor evidence="1">
        <name>K(+)</name>
        <dbReference type="ChEBI" id="CHEBI:29103"/>
    </cofactor>
</comment>
<comment type="pathway">
    <text>Carbohydrate degradation; glycolysis; pyruvate from D-glyceraldehyde 3-phosphate: step 5/5.</text>
</comment>
<comment type="similarity">
    <text evidence="3">Belongs to the pyruvate kinase family.</text>
</comment>
<comment type="similarity">
    <text evidence="3">In the C-terminal section; belongs to the PEP-utilizing enzyme family.</text>
</comment>
<organism>
    <name type="scientific">Staphylococcus aureus (strain COL)</name>
    <dbReference type="NCBI Taxonomy" id="93062"/>
    <lineage>
        <taxon>Bacteria</taxon>
        <taxon>Bacillati</taxon>
        <taxon>Bacillota</taxon>
        <taxon>Bacilli</taxon>
        <taxon>Bacillales</taxon>
        <taxon>Staphylococcaceae</taxon>
        <taxon>Staphylococcus</taxon>
    </lineage>
</organism>
<accession>Q5HF76</accession>
<keyword id="KW-0067">ATP-binding</keyword>
<keyword id="KW-0324">Glycolysis</keyword>
<keyword id="KW-0418">Kinase</keyword>
<keyword id="KW-0460">Magnesium</keyword>
<keyword id="KW-0479">Metal-binding</keyword>
<keyword id="KW-0547">Nucleotide-binding</keyword>
<keyword id="KW-0630">Potassium</keyword>
<keyword id="KW-0670">Pyruvate</keyword>
<keyword id="KW-0808">Transferase</keyword>
<feature type="chain" id="PRO_0000294129" description="Pyruvate kinase">
    <location>
        <begin position="1"/>
        <end position="585"/>
    </location>
</feature>
<feature type="binding site" evidence="1">
    <location>
        <position position="32"/>
    </location>
    <ligand>
        <name>substrate</name>
    </ligand>
</feature>
<feature type="binding site" evidence="2">
    <location>
        <begin position="34"/>
        <end position="37"/>
    </location>
    <ligand>
        <name>ATP</name>
        <dbReference type="ChEBI" id="CHEBI:30616"/>
    </ligand>
</feature>
<feature type="binding site" evidence="1">
    <location>
        <position position="34"/>
    </location>
    <ligand>
        <name>K(+)</name>
        <dbReference type="ChEBI" id="CHEBI:29103"/>
    </ligand>
</feature>
<feature type="binding site" evidence="1">
    <location>
        <position position="36"/>
    </location>
    <ligand>
        <name>K(+)</name>
        <dbReference type="ChEBI" id="CHEBI:29103"/>
    </ligand>
</feature>
<feature type="binding site" evidence="1">
    <location>
        <position position="66"/>
    </location>
    <ligand>
        <name>K(+)</name>
        <dbReference type="ChEBI" id="CHEBI:29103"/>
    </ligand>
</feature>
<feature type="binding site" evidence="1">
    <location>
        <position position="67"/>
    </location>
    <ligand>
        <name>K(+)</name>
        <dbReference type="ChEBI" id="CHEBI:29103"/>
    </ligand>
</feature>
<feature type="binding site" evidence="2">
    <location>
        <position position="73"/>
    </location>
    <ligand>
        <name>ATP</name>
        <dbReference type="ChEBI" id="CHEBI:30616"/>
    </ligand>
</feature>
<feature type="binding site" evidence="2">
    <location>
        <position position="156"/>
    </location>
    <ligand>
        <name>ATP</name>
        <dbReference type="ChEBI" id="CHEBI:30616"/>
    </ligand>
</feature>
<feature type="binding site" evidence="1">
    <location>
        <position position="221"/>
    </location>
    <ligand>
        <name>Mg(2+)</name>
        <dbReference type="ChEBI" id="CHEBI:18420"/>
    </ligand>
</feature>
<feature type="binding site" evidence="1">
    <location>
        <position position="244"/>
    </location>
    <ligand>
        <name>substrate</name>
    </ligand>
</feature>
<feature type="binding site" evidence="1">
    <location>
        <position position="245"/>
    </location>
    <ligand>
        <name>Mg(2+)</name>
        <dbReference type="ChEBI" id="CHEBI:18420"/>
    </ligand>
</feature>
<feature type="binding site" evidence="1">
    <location>
        <position position="245"/>
    </location>
    <ligand>
        <name>substrate</name>
    </ligand>
</feature>
<feature type="binding site" evidence="1">
    <location>
        <position position="277"/>
    </location>
    <ligand>
        <name>substrate</name>
    </ligand>
</feature>
<feature type="site" description="Transition state stabilizer" evidence="1">
    <location>
        <position position="219"/>
    </location>
</feature>
<proteinExistence type="inferred from homology"/>
<protein>
    <recommendedName>
        <fullName>Pyruvate kinase</fullName>
        <shortName>PK</shortName>
        <ecNumber>2.7.1.40</ecNumber>
    </recommendedName>
</protein>
<name>KPYK_STAAC</name>
<reference key="1">
    <citation type="journal article" date="2005" name="J. Bacteriol.">
        <title>Insights on evolution of virulence and resistance from the complete genome analysis of an early methicillin-resistant Staphylococcus aureus strain and a biofilm-producing methicillin-resistant Staphylococcus epidermidis strain.</title>
        <authorList>
            <person name="Gill S.R."/>
            <person name="Fouts D.E."/>
            <person name="Archer G.L."/>
            <person name="Mongodin E.F."/>
            <person name="DeBoy R.T."/>
            <person name="Ravel J."/>
            <person name="Paulsen I.T."/>
            <person name="Kolonay J.F."/>
            <person name="Brinkac L.M."/>
            <person name="Beanan M.J."/>
            <person name="Dodson R.J."/>
            <person name="Daugherty S.C."/>
            <person name="Madupu R."/>
            <person name="Angiuoli S.V."/>
            <person name="Durkin A.S."/>
            <person name="Haft D.H."/>
            <person name="Vamathevan J.J."/>
            <person name="Khouri H."/>
            <person name="Utterback T.R."/>
            <person name="Lee C."/>
            <person name="Dimitrov G."/>
            <person name="Jiang L."/>
            <person name="Qin H."/>
            <person name="Weidman J."/>
            <person name="Tran K."/>
            <person name="Kang K.H."/>
            <person name="Hance I.R."/>
            <person name="Nelson K.E."/>
            <person name="Fraser C.M."/>
        </authorList>
    </citation>
    <scope>NUCLEOTIDE SEQUENCE [LARGE SCALE GENOMIC DNA]</scope>
    <source>
        <strain>COL</strain>
    </source>
</reference>